<keyword id="KW-0010">Activator</keyword>
<keyword id="KW-0963">Cytoplasm</keyword>
<keyword id="KW-0238">DNA-binding</keyword>
<keyword id="KW-1185">Reference proteome</keyword>
<keyword id="KW-0804">Transcription</keyword>
<keyword id="KW-0805">Transcription regulation</keyword>
<reference key="1">
    <citation type="journal article" date="2001" name="Nature">
        <title>Genome sequence of enterohaemorrhagic Escherichia coli O157:H7.</title>
        <authorList>
            <person name="Perna N.T."/>
            <person name="Plunkett G. III"/>
            <person name="Burland V."/>
            <person name="Mau B."/>
            <person name="Glasner J.D."/>
            <person name="Rose D.J."/>
            <person name="Mayhew G.F."/>
            <person name="Evans P.S."/>
            <person name="Gregor J."/>
            <person name="Kirkpatrick H.A."/>
            <person name="Posfai G."/>
            <person name="Hackett J."/>
            <person name="Klink S."/>
            <person name="Boutin A."/>
            <person name="Shao Y."/>
            <person name="Miller L."/>
            <person name="Grotbeck E.J."/>
            <person name="Davis N.W."/>
            <person name="Lim A."/>
            <person name="Dimalanta E.T."/>
            <person name="Potamousis K."/>
            <person name="Apodaca J."/>
            <person name="Anantharaman T.S."/>
            <person name="Lin J."/>
            <person name="Yen G."/>
            <person name="Schwartz D.C."/>
            <person name="Welch R.A."/>
            <person name="Blattner F.R."/>
        </authorList>
    </citation>
    <scope>NUCLEOTIDE SEQUENCE [LARGE SCALE GENOMIC DNA]</scope>
    <source>
        <strain>O157:H7 / EDL933 / ATCC 700927 / EHEC</strain>
    </source>
</reference>
<reference key="2">
    <citation type="journal article" date="2001" name="DNA Res.">
        <title>Complete genome sequence of enterohemorrhagic Escherichia coli O157:H7 and genomic comparison with a laboratory strain K-12.</title>
        <authorList>
            <person name="Hayashi T."/>
            <person name="Makino K."/>
            <person name="Ohnishi M."/>
            <person name="Kurokawa K."/>
            <person name="Ishii K."/>
            <person name="Yokoyama K."/>
            <person name="Han C.-G."/>
            <person name="Ohtsubo E."/>
            <person name="Nakayama K."/>
            <person name="Murata T."/>
            <person name="Tanaka M."/>
            <person name="Tobe T."/>
            <person name="Iida T."/>
            <person name="Takami H."/>
            <person name="Honda T."/>
            <person name="Sasakawa C."/>
            <person name="Ogasawara N."/>
            <person name="Yasunaga T."/>
            <person name="Kuhara S."/>
            <person name="Shiba T."/>
            <person name="Hattori M."/>
            <person name="Shinagawa H."/>
        </authorList>
    </citation>
    <scope>NUCLEOTIDE SEQUENCE [LARGE SCALE GENOMIC DNA]</scope>
    <source>
        <strain>O157:H7 / Sakai / RIMD 0509952 / EHEC</strain>
    </source>
</reference>
<evidence type="ECO:0000250" key="1"/>
<name>CSPC_ECO57</name>
<comment type="subcellular location">
    <subcellularLocation>
        <location evidence="1">Cytoplasm</location>
    </subcellularLocation>
</comment>
<sequence>MAKIKGQVKWFNESKGFGFITPADGSKDVFVHFSAIQGNGFKTLAEGQNVEFEIQDGQKGPAAVNVTAI</sequence>
<accession>P0A9Y8</accession>
<accession>O68636</accession>
<accession>P36996</accession>
<organism>
    <name type="scientific">Escherichia coli O157:H7</name>
    <dbReference type="NCBI Taxonomy" id="83334"/>
    <lineage>
        <taxon>Bacteria</taxon>
        <taxon>Pseudomonadati</taxon>
        <taxon>Pseudomonadota</taxon>
        <taxon>Gammaproteobacteria</taxon>
        <taxon>Enterobacterales</taxon>
        <taxon>Enterobacteriaceae</taxon>
        <taxon>Escherichia</taxon>
    </lineage>
</organism>
<dbReference type="EMBL" id="AE005174">
    <property type="protein sequence ID" value="AAG56812.1"/>
    <property type="molecule type" value="Genomic_DNA"/>
</dbReference>
<dbReference type="EMBL" id="BA000007">
    <property type="protein sequence ID" value="BAB35956.1"/>
    <property type="molecule type" value="Genomic_DNA"/>
</dbReference>
<dbReference type="PIR" id="E90945">
    <property type="entry name" value="E90945"/>
</dbReference>
<dbReference type="PIR" id="H85793">
    <property type="entry name" value="H85793"/>
</dbReference>
<dbReference type="RefSeq" id="NP_310560.1">
    <property type="nucleotide sequence ID" value="NC_002695.1"/>
</dbReference>
<dbReference type="SMR" id="P0A9Y8"/>
<dbReference type="STRING" id="155864.Z2868"/>
<dbReference type="GeneID" id="912295"/>
<dbReference type="KEGG" id="ece:Z2868"/>
<dbReference type="KEGG" id="ecs:ECs_2533"/>
<dbReference type="PATRIC" id="fig|386585.9.peg.2655"/>
<dbReference type="eggNOG" id="COG1278">
    <property type="taxonomic scope" value="Bacteria"/>
</dbReference>
<dbReference type="HOGENOM" id="CLU_117621_2_1_6"/>
<dbReference type="OMA" id="EEIFVHV"/>
<dbReference type="Proteomes" id="UP000000558">
    <property type="component" value="Chromosome"/>
</dbReference>
<dbReference type="Proteomes" id="UP000002519">
    <property type="component" value="Chromosome"/>
</dbReference>
<dbReference type="GO" id="GO:0005829">
    <property type="term" value="C:cytosol"/>
    <property type="evidence" value="ECO:0007669"/>
    <property type="project" value="UniProtKB-ARBA"/>
</dbReference>
<dbReference type="GO" id="GO:0003677">
    <property type="term" value="F:DNA binding"/>
    <property type="evidence" value="ECO:0007669"/>
    <property type="project" value="UniProtKB-KW"/>
</dbReference>
<dbReference type="CDD" id="cd04458">
    <property type="entry name" value="CSP_CDS"/>
    <property type="match status" value="1"/>
</dbReference>
<dbReference type="FunFam" id="2.40.50.140:FF:000006">
    <property type="entry name" value="Cold shock protein CspC"/>
    <property type="match status" value="1"/>
</dbReference>
<dbReference type="Gene3D" id="2.40.50.140">
    <property type="entry name" value="Nucleic acid-binding proteins"/>
    <property type="match status" value="1"/>
</dbReference>
<dbReference type="InterPro" id="IPR012156">
    <property type="entry name" value="Cold_shock_CspA"/>
</dbReference>
<dbReference type="InterPro" id="IPR050181">
    <property type="entry name" value="Cold_shock_domain"/>
</dbReference>
<dbReference type="InterPro" id="IPR011129">
    <property type="entry name" value="CSD"/>
</dbReference>
<dbReference type="InterPro" id="IPR019844">
    <property type="entry name" value="CSD_CS"/>
</dbReference>
<dbReference type="InterPro" id="IPR002059">
    <property type="entry name" value="CSP_DNA-bd"/>
</dbReference>
<dbReference type="InterPro" id="IPR012340">
    <property type="entry name" value="NA-bd_OB-fold"/>
</dbReference>
<dbReference type="NCBIfam" id="NF007062">
    <property type="entry name" value="PRK09507.1"/>
    <property type="match status" value="1"/>
</dbReference>
<dbReference type="NCBIfam" id="NF008190">
    <property type="entry name" value="PRK10943.1"/>
    <property type="match status" value="1"/>
</dbReference>
<dbReference type="PANTHER" id="PTHR11544">
    <property type="entry name" value="COLD SHOCK DOMAIN CONTAINING PROTEINS"/>
    <property type="match status" value="1"/>
</dbReference>
<dbReference type="Pfam" id="PF00313">
    <property type="entry name" value="CSD"/>
    <property type="match status" value="1"/>
</dbReference>
<dbReference type="PIRSF" id="PIRSF002599">
    <property type="entry name" value="Cold_shock_A"/>
    <property type="match status" value="1"/>
</dbReference>
<dbReference type="PRINTS" id="PR00050">
    <property type="entry name" value="COLDSHOCK"/>
</dbReference>
<dbReference type="SMART" id="SM00357">
    <property type="entry name" value="CSP"/>
    <property type="match status" value="1"/>
</dbReference>
<dbReference type="SUPFAM" id="SSF50249">
    <property type="entry name" value="Nucleic acid-binding proteins"/>
    <property type="match status" value="1"/>
</dbReference>
<dbReference type="PROSITE" id="PS00352">
    <property type="entry name" value="CSD_1"/>
    <property type="match status" value="1"/>
</dbReference>
<dbReference type="PROSITE" id="PS51857">
    <property type="entry name" value="CSD_2"/>
    <property type="match status" value="1"/>
</dbReference>
<proteinExistence type="inferred from homology"/>
<protein>
    <recommendedName>
        <fullName>Cold shock-like protein CspC</fullName>
        <shortName>CSP-C</shortName>
    </recommendedName>
</protein>
<feature type="initiator methionine" description="Removed" evidence="1">
    <location>
        <position position="1"/>
    </location>
</feature>
<feature type="chain" id="PRO_0000100243" description="Cold shock-like protein CspC">
    <location>
        <begin position="2"/>
        <end position="69"/>
    </location>
</feature>
<feature type="domain" description="CSD">
    <location>
        <begin position="6"/>
        <end position="66"/>
    </location>
</feature>
<gene>
    <name type="primary">cspC</name>
    <name type="ordered locus">Z2868</name>
    <name type="ordered locus">ECs2533</name>
</gene>